<name>WBP2L_BOVIN</name>
<protein>
    <recommendedName>
        <fullName>Postacrosomal sheath WW domain-binding protein</fullName>
    </recommendedName>
    <alternativeName>
        <fullName>WW domain-binding protein 2-like</fullName>
    </alternativeName>
</protein>
<reference key="1">
    <citation type="journal article" date="2007" name="J. Biol. Chem.">
        <title>PAWP, a sperm-specific WW domain-binding protein, promotes meiotic resumption and pronuclear development during fertilization.</title>
        <authorList>
            <person name="Wu A.T.H."/>
            <person name="Sutovsky P."/>
            <person name="Manandhar G."/>
            <person name="Xu W."/>
            <person name="Katayama M."/>
            <person name="Day B.N."/>
            <person name="Park K.-W."/>
            <person name="Yi Y.-J."/>
            <person name="Xi Y.W."/>
            <person name="Prather R.S."/>
            <person name="Oko R."/>
        </authorList>
    </citation>
    <scope>NUCLEOTIDE SEQUENCE [MRNA]</scope>
    <scope>FUNCTION</scope>
    <scope>TISSUE SPECIFICITY</scope>
    <scope>MOTIF</scope>
    <source>
        <tissue>Sperm</tissue>
    </source>
</reference>
<keyword id="KW-1185">Reference proteome</keyword>
<keyword id="KW-0677">Repeat</keyword>
<proteinExistence type="evidence at transcript level"/>
<dbReference type="EMBL" id="AF322215">
    <property type="protein sequence ID" value="AAQ14855.1"/>
    <property type="molecule type" value="mRNA"/>
</dbReference>
<dbReference type="RefSeq" id="NP_001075910.1">
    <property type="nucleotide sequence ID" value="NM_001082441.2"/>
</dbReference>
<dbReference type="SMR" id="A3KFF6"/>
<dbReference type="FunCoup" id="A3KFF6">
    <property type="interactions" value="448"/>
</dbReference>
<dbReference type="STRING" id="9913.ENSBTAP00000017533"/>
<dbReference type="PaxDb" id="9913-ENSBTAP00000017533"/>
<dbReference type="Ensembl" id="ENSBTAT00000017533.4">
    <property type="protein sequence ID" value="ENSBTAP00000017533.3"/>
    <property type="gene ID" value="ENSBTAG00000013174.4"/>
</dbReference>
<dbReference type="GeneID" id="523070"/>
<dbReference type="KEGG" id="bta:523070"/>
<dbReference type="CTD" id="164684"/>
<dbReference type="VEuPathDB" id="HostDB:ENSBTAG00000013174"/>
<dbReference type="VGNC" id="VGNC:36873">
    <property type="gene designation" value="WBP2NL"/>
</dbReference>
<dbReference type="eggNOG" id="KOG3294">
    <property type="taxonomic scope" value="Eukaryota"/>
</dbReference>
<dbReference type="GeneTree" id="ENSGT00530000063718"/>
<dbReference type="HOGENOM" id="CLU_057206_2_0_1"/>
<dbReference type="InParanoid" id="A3KFF6"/>
<dbReference type="OMA" id="PLGTDYW"/>
<dbReference type="OrthoDB" id="1259151at2759"/>
<dbReference type="TreeFam" id="TF314141"/>
<dbReference type="Proteomes" id="UP000009136">
    <property type="component" value="Chromosome 5"/>
</dbReference>
<dbReference type="Bgee" id="ENSBTAG00000013174">
    <property type="expression patterns" value="Expressed in semen and 9 other cell types or tissues"/>
</dbReference>
<dbReference type="GO" id="GO:0005634">
    <property type="term" value="C:nucleus"/>
    <property type="evidence" value="ECO:0000318"/>
    <property type="project" value="GO_Central"/>
</dbReference>
<dbReference type="GO" id="GO:0033011">
    <property type="term" value="C:perinuclear theca"/>
    <property type="evidence" value="ECO:0000314"/>
    <property type="project" value="HGNC-UCL"/>
</dbReference>
<dbReference type="GO" id="GO:0036126">
    <property type="term" value="C:sperm flagellum"/>
    <property type="evidence" value="ECO:0007669"/>
    <property type="project" value="Ensembl"/>
</dbReference>
<dbReference type="GO" id="GO:0061827">
    <property type="term" value="C:sperm head"/>
    <property type="evidence" value="ECO:0007669"/>
    <property type="project" value="Ensembl"/>
</dbReference>
<dbReference type="GO" id="GO:0031490">
    <property type="term" value="F:chromatin DNA binding"/>
    <property type="evidence" value="ECO:0000318"/>
    <property type="project" value="GO_Central"/>
</dbReference>
<dbReference type="GO" id="GO:0003713">
    <property type="term" value="F:transcription coactivator activity"/>
    <property type="evidence" value="ECO:0000318"/>
    <property type="project" value="GO_Central"/>
</dbReference>
<dbReference type="GO" id="GO:0050699">
    <property type="term" value="F:WW domain binding"/>
    <property type="evidence" value="ECO:0000314"/>
    <property type="project" value="HGNC-UCL"/>
</dbReference>
<dbReference type="GO" id="GO:0007343">
    <property type="term" value="P:egg activation"/>
    <property type="evidence" value="ECO:0000314"/>
    <property type="project" value="HGNC-UCL"/>
</dbReference>
<dbReference type="GO" id="GO:0035038">
    <property type="term" value="P:female pronucleus assembly"/>
    <property type="evidence" value="ECO:0000314"/>
    <property type="project" value="MGI"/>
</dbReference>
<dbReference type="GO" id="GO:0035039">
    <property type="term" value="P:male pronucleus assembly"/>
    <property type="evidence" value="ECO:0000314"/>
    <property type="project" value="HGNC-UCL"/>
</dbReference>
<dbReference type="GO" id="GO:0045893">
    <property type="term" value="P:positive regulation of DNA-templated transcription"/>
    <property type="evidence" value="ECO:0000318"/>
    <property type="project" value="GO_Central"/>
</dbReference>
<dbReference type="CDD" id="cd13214">
    <property type="entry name" value="PH-GRAM_WBP2"/>
    <property type="match status" value="1"/>
</dbReference>
<dbReference type="InterPro" id="IPR004182">
    <property type="entry name" value="GRAM"/>
</dbReference>
<dbReference type="InterPro" id="IPR044852">
    <property type="entry name" value="WBP2-like"/>
</dbReference>
<dbReference type="PANTHER" id="PTHR31606:SF2">
    <property type="entry name" value="POSTACROSOMAL SHEATH WW DOMAIN-BINDING PROTEIN"/>
    <property type="match status" value="1"/>
</dbReference>
<dbReference type="PANTHER" id="PTHR31606">
    <property type="entry name" value="WW DOMAIN BINDING PROTEIN 2, ISOFORM E"/>
    <property type="match status" value="1"/>
</dbReference>
<dbReference type="Pfam" id="PF02893">
    <property type="entry name" value="GRAM"/>
    <property type="match status" value="1"/>
</dbReference>
<dbReference type="SUPFAM" id="SSF50729">
    <property type="entry name" value="PH domain-like"/>
    <property type="match status" value="1"/>
</dbReference>
<feature type="chain" id="PRO_0000289126" description="Postacrosomal sheath WW domain-binding protein">
    <location>
        <begin position="1"/>
        <end position="313"/>
    </location>
</feature>
<feature type="domain" description="GRAM">
    <location>
        <begin position="8"/>
        <end position="87"/>
    </location>
</feature>
<feature type="repeat" description="1">
    <location>
        <begin position="179"/>
        <end position="185"/>
    </location>
</feature>
<feature type="repeat" description="2">
    <location>
        <begin position="193"/>
        <end position="199"/>
    </location>
</feature>
<feature type="repeat" description="3">
    <location>
        <begin position="207"/>
        <end position="213"/>
    </location>
</feature>
<feature type="repeat" description="4">
    <location>
        <begin position="214"/>
        <end position="220"/>
    </location>
</feature>
<feature type="repeat" description="5">
    <location>
        <begin position="221"/>
        <end position="227"/>
    </location>
</feature>
<feature type="repeat" description="6">
    <location>
        <begin position="228"/>
        <end position="234"/>
    </location>
</feature>
<feature type="repeat" description="7">
    <location>
        <begin position="235"/>
        <end position="241"/>
    </location>
</feature>
<feature type="repeat" description="8">
    <location>
        <begin position="242"/>
        <end position="248"/>
    </location>
</feature>
<feature type="repeat" description="9">
    <location>
        <begin position="249"/>
        <end position="255"/>
    </location>
</feature>
<feature type="repeat" description="10">
    <location>
        <begin position="256"/>
        <end position="262"/>
    </location>
</feature>
<feature type="repeat" description="11">
    <location>
        <begin position="263"/>
        <end position="269"/>
    </location>
</feature>
<feature type="repeat" description="12">
    <location>
        <begin position="270"/>
        <end position="276"/>
    </location>
</feature>
<feature type="region of interest" description="12 X 7 AA tandem repeat of Y-G-X-P-P-X-G">
    <location>
        <begin position="179"/>
        <end position="276"/>
    </location>
</feature>
<feature type="region of interest" description="Disordered" evidence="1">
    <location>
        <begin position="254"/>
        <end position="313"/>
    </location>
</feature>
<feature type="short sequence motif" description="PPxY motif 1">
    <location>
        <begin position="183"/>
        <end position="186"/>
    </location>
</feature>
<feature type="short sequence motif" description="PPxY motif 2">
    <location>
        <begin position="281"/>
        <end position="284"/>
    </location>
</feature>
<feature type="compositionally biased region" description="Gly residues" evidence="1">
    <location>
        <begin position="254"/>
        <end position="264"/>
    </location>
</feature>
<feature type="compositionally biased region" description="Low complexity" evidence="1">
    <location>
        <begin position="265"/>
        <end position="276"/>
    </location>
</feature>
<feature type="compositionally biased region" description="Polar residues" evidence="1">
    <location>
        <begin position="289"/>
        <end position="313"/>
    </location>
</feature>
<gene>
    <name type="primary">WBP2NL</name>
    <name type="synonym">PAWP</name>
</gene>
<evidence type="ECO:0000256" key="1">
    <source>
        <dbReference type="SAM" id="MobiDB-lite"/>
    </source>
</evidence>
<evidence type="ECO:0000269" key="2">
    <source>
    </source>
</evidence>
<comment type="function">
    <text evidence="2">May play a role in meiotic resumption and pronuclear formation, mediated by a WW domain-signaling pathway during fertilization.</text>
</comment>
<comment type="tissue specificity">
    <text evidence="2">Expressed in testis.</text>
</comment>
<sequence length="313" mass="31966">MAVNQSHTESRRGALIPSGESVLKQCEDVDLCFLQKPVESYLFNGTKKGTLFLTSYRVVFVTSHLVNDPMLSFMMPFGLMSDCTIEQPIFAPNYIKGTIQAAPGGGWEGQAVFKLSFRKGGAIEFAQLMVKAASAAARGIPLGSVNYWFDTSGLYIITVPGAAVCSSQTPCPAYPIVIYGPPPPGYTVQPGEYGTPPEGYGAQPGGYGAPPMGYGAPPVGYGVPPGGYGVPPGGYGVPPGGYGAPPGGYGVPPGGYGAPPGGYGAPPAGYGAPPAGNEALPPAYEAPSAGNTAASHRSMTAQQETSLPTTSSS</sequence>
<organism>
    <name type="scientific">Bos taurus</name>
    <name type="common">Bovine</name>
    <dbReference type="NCBI Taxonomy" id="9913"/>
    <lineage>
        <taxon>Eukaryota</taxon>
        <taxon>Metazoa</taxon>
        <taxon>Chordata</taxon>
        <taxon>Craniata</taxon>
        <taxon>Vertebrata</taxon>
        <taxon>Euteleostomi</taxon>
        <taxon>Mammalia</taxon>
        <taxon>Eutheria</taxon>
        <taxon>Laurasiatheria</taxon>
        <taxon>Artiodactyla</taxon>
        <taxon>Ruminantia</taxon>
        <taxon>Pecora</taxon>
        <taxon>Bovidae</taxon>
        <taxon>Bovinae</taxon>
        <taxon>Bos</taxon>
    </lineage>
</organism>
<accession>A3KFF6</accession>